<evidence type="ECO:0000250" key="1">
    <source>
        <dbReference type="UniProtKB" id="Q8U1N8"/>
    </source>
</evidence>
<evidence type="ECO:0000269" key="2">
    <source>
    </source>
</evidence>
<evidence type="ECO:0000269" key="3">
    <source>
    </source>
</evidence>
<evidence type="ECO:0000269" key="4">
    <source>
    </source>
</evidence>
<evidence type="ECO:0000303" key="5">
    <source>
    </source>
</evidence>
<evidence type="ECO:0000305" key="6"/>
<evidence type="ECO:0000312" key="7">
    <source>
        <dbReference type="EMBL" id="BAB67213.1"/>
    </source>
</evidence>
<dbReference type="EC" id="3.1.-.-" evidence="2"/>
<dbReference type="EMBL" id="BA000023">
    <property type="protein sequence ID" value="BAB67213.1"/>
    <property type="molecule type" value="Genomic_DNA"/>
</dbReference>
<dbReference type="RefSeq" id="WP_010980188.1">
    <property type="nucleotide sequence ID" value="NC_003106.2"/>
</dbReference>
<dbReference type="SMR" id="Q96YR4"/>
<dbReference type="STRING" id="273063.STK_21090"/>
<dbReference type="GeneID" id="1460181"/>
<dbReference type="KEGG" id="sto:STK_21090"/>
<dbReference type="PATRIC" id="fig|273063.9.peg.2401"/>
<dbReference type="eggNOG" id="arCOG00367">
    <property type="taxonomic scope" value="Archaea"/>
</dbReference>
<dbReference type="OrthoDB" id="33831at2157"/>
<dbReference type="Proteomes" id="UP000001015">
    <property type="component" value="Chromosome"/>
</dbReference>
<dbReference type="GO" id="GO:0004519">
    <property type="term" value="F:endonuclease activity"/>
    <property type="evidence" value="ECO:0007669"/>
    <property type="project" value="UniProtKB-KW"/>
</dbReference>
<dbReference type="GO" id="GO:0004527">
    <property type="term" value="F:exonuclease activity"/>
    <property type="evidence" value="ECO:0007669"/>
    <property type="project" value="UniProtKB-KW"/>
</dbReference>
<dbReference type="GO" id="GO:0046872">
    <property type="term" value="F:metal ion binding"/>
    <property type="evidence" value="ECO:0007669"/>
    <property type="project" value="UniProtKB-KW"/>
</dbReference>
<dbReference type="GO" id="GO:0006281">
    <property type="term" value="P:DNA repair"/>
    <property type="evidence" value="ECO:0007669"/>
    <property type="project" value="UniProtKB-KW"/>
</dbReference>
<dbReference type="InterPro" id="IPR053461">
    <property type="entry name" value="DSB_repair_nuclease_NurA"/>
</dbReference>
<dbReference type="InterPro" id="IPR018977">
    <property type="entry name" value="NurA_domain"/>
</dbReference>
<dbReference type="NCBIfam" id="NF041033">
    <property type="entry name" value="NurA_Sulf"/>
    <property type="match status" value="1"/>
</dbReference>
<dbReference type="Pfam" id="PF09376">
    <property type="entry name" value="NurA"/>
    <property type="match status" value="1"/>
</dbReference>
<dbReference type="SMART" id="SM00933">
    <property type="entry name" value="NurA"/>
    <property type="match status" value="1"/>
</dbReference>
<keyword id="KW-0227">DNA damage</keyword>
<keyword id="KW-0234">DNA repair</keyword>
<keyword id="KW-0238">DNA-binding</keyword>
<keyword id="KW-0255">Endonuclease</keyword>
<keyword id="KW-0269">Exonuclease</keyword>
<keyword id="KW-0378">Hydrolase</keyword>
<keyword id="KW-0464">Manganese</keyword>
<keyword id="KW-0479">Metal-binding</keyword>
<keyword id="KW-0540">Nuclease</keyword>
<keyword id="KW-1185">Reference proteome</keyword>
<feature type="chain" id="PRO_0000434030" description="DNA double-strand break repair nuclease NurA">
    <location>
        <begin position="1"/>
        <end position="331"/>
    </location>
</feature>
<feature type="binding site" evidence="1">
    <location>
        <position position="56"/>
    </location>
    <ligand>
        <name>Mn(2+)</name>
        <dbReference type="ChEBI" id="CHEBI:29035"/>
    </ligand>
</feature>
<feature type="binding site" evidence="1">
    <location>
        <position position="131"/>
    </location>
    <ligand>
        <name>Mn(2+)</name>
        <dbReference type="ChEBI" id="CHEBI:29035"/>
    </ligand>
</feature>
<feature type="mutagenesis site" description="Lack of nuclease activity." evidence="4">
    <original>D</original>
    <variation>A</variation>
    <location>
        <position position="56"/>
    </location>
</feature>
<feature type="mutagenesis site" description="Lack of nuclease activity." evidence="4">
    <original>E</original>
    <variation>A</variation>
    <location>
        <position position="114"/>
    </location>
</feature>
<feature type="mutagenesis site" description="Lack of nuclease activity." evidence="4">
    <original>D</original>
    <variation>A</variation>
    <location>
        <position position="131"/>
    </location>
</feature>
<feature type="mutagenesis site" description="Strong decrease in nuclease activity. Does not form a stable dimer." evidence="4">
    <original>Y</original>
    <variation>A</variation>
    <location>
        <position position="291"/>
    </location>
</feature>
<feature type="mutagenesis site" description="Lack of nuclease activity." evidence="4">
    <original>H</original>
    <variation>A</variation>
    <location>
        <position position="299"/>
    </location>
</feature>
<comment type="function">
    <text evidence="1 2">Involved in DNA double-strand break (DSB) repair (By similarity). Probably acts with HerA to stimulate resection of the 5' strand and produce the long 3' single-strand that is required for RadA loading (By similarity). Exhibits both single-stranded endonuclease activity and 5'-3' exonuclease activity on single-stranded and double-stranded DNA (PubMed:18194801).</text>
</comment>
<comment type="cofactor">
    <cofactor evidence="1">
        <name>Mn(2+)</name>
        <dbReference type="ChEBI" id="CHEBI:29035"/>
    </cofactor>
</comment>
<comment type="activity regulation">
    <text evidence="2">The 5'-3' ssDNA and dsDNA exonuclease and ssDNA endonuclease activities are inhibited by SSB (single-stranded DNA-binding protein).</text>
</comment>
<comment type="subunit">
    <text evidence="2 4">Homodimer (PubMed:21197557). Interacts with SSB (PubMed:18194801).</text>
</comment>
<comment type="induction">
    <text evidence="3">Part of the nurA-rad50-mre11-herA operon, these genes are cotranscribed.</text>
</comment>
<comment type="domain">
    <text evidence="4">The C-terminus is required for interaction with SSB.</text>
</comment>
<comment type="similarity">
    <text evidence="6">Belongs to the NurA family.</text>
</comment>
<proteinExistence type="evidence at protein level"/>
<organism>
    <name type="scientific">Sulfurisphaera tokodaii (strain DSM 16993 / JCM 10545 / NBRC 100140 / 7)</name>
    <name type="common">Sulfolobus tokodaii</name>
    <dbReference type="NCBI Taxonomy" id="273063"/>
    <lineage>
        <taxon>Archaea</taxon>
        <taxon>Thermoproteota</taxon>
        <taxon>Thermoprotei</taxon>
        <taxon>Sulfolobales</taxon>
        <taxon>Sulfolobaceae</taxon>
        <taxon>Sulfurisphaera</taxon>
    </lineage>
</organism>
<name>NURA_SULTO</name>
<sequence>MIKDVYELLLSRKNEIEKQISLLDETSNNLLKEKIKEKWKEYCQTQGKLSTVLAIDGGMWIKELRSGIVYIVNAEIVKAEGFNVTPIDSKALIGVLRPGNMAKERVSLLMQLLELKLGLKHGDKAEYILFDGSIVKKIGKHKFSTKISLLDDIDVMDDKIYSLEENDEELMHKYLVAENQLVMSALISKYKGKLVWISKNSKSTELFQENISDVSLLELFTKNCGYTIGIEKKISSENIISPKASTILSNASFYSFYTRLKEGEKILKIEMFNNEIENIISILSPISIKGYPYPLLKVHTDVKVSRQDRERIKQLLNIKKKDIEWWPSQLF</sequence>
<accession>Q96YR4</accession>
<protein>
    <recommendedName>
        <fullName evidence="6">DNA double-strand break repair nuclease NurA</fullName>
        <ecNumber evidence="2">3.1.-.-</ecNumber>
    </recommendedName>
    <alternativeName>
        <fullName evidence="5">StoNurA</fullName>
    </alternativeName>
</protein>
<gene>
    <name evidence="5" type="primary">nurA</name>
    <name evidence="7" type="ordered locus">STK_21090</name>
</gene>
<reference key="1">
    <citation type="journal article" date="2001" name="DNA Res.">
        <title>Complete genome sequence of an aerobic thermoacidophilic Crenarchaeon, Sulfolobus tokodaii strain7.</title>
        <authorList>
            <person name="Kawarabayasi Y."/>
            <person name="Hino Y."/>
            <person name="Horikawa H."/>
            <person name="Jin-no K."/>
            <person name="Takahashi M."/>
            <person name="Sekine M."/>
            <person name="Baba S."/>
            <person name="Ankai A."/>
            <person name="Kosugi H."/>
            <person name="Hosoyama A."/>
            <person name="Fukui S."/>
            <person name="Nagai Y."/>
            <person name="Nishijima K."/>
            <person name="Otsuka R."/>
            <person name="Nakazawa H."/>
            <person name="Takamiya M."/>
            <person name="Kato Y."/>
            <person name="Yoshizawa T."/>
            <person name="Tanaka T."/>
            <person name="Kudoh Y."/>
            <person name="Yamazaki J."/>
            <person name="Kushida N."/>
            <person name="Oguchi A."/>
            <person name="Aoki K."/>
            <person name="Masuda S."/>
            <person name="Yanagii M."/>
            <person name="Nishimura M."/>
            <person name="Yamagishi A."/>
            <person name="Oshima T."/>
            <person name="Kikuchi H."/>
        </authorList>
    </citation>
    <scope>NUCLEOTIDE SEQUENCE [LARGE SCALE GENOMIC DNA]</scope>
    <source>
        <strain>DSM 16993 / JCM 10545 / NBRC 100140 / 7</strain>
    </source>
</reference>
<reference key="2">
    <citation type="journal article" date="2008" name="Biochem. Biophys. Res. Commun.">
        <title>Physical and functional interaction between archaeal single-stranded DNA-binding protein and the 5'-3' nuclease NurA.</title>
        <authorList>
            <person name="Wei T."/>
            <person name="Zhang S."/>
            <person name="Zhu S."/>
            <person name="Sheng D."/>
            <person name="Ni J."/>
            <person name="Shen Y."/>
        </authorList>
    </citation>
    <scope>FUNCTION</scope>
    <scope>ACTIVITY REGULATION</scope>
    <scope>INTERACTION WITH SSB</scope>
</reference>
<reference key="3">
    <citation type="journal article" date="2008" name="DNA Repair">
        <title>Archaeal DNA helicase HerA interacts with Mre11 homologue and unwinds blunt-ended double-stranded DNA and recombination intermediates.</title>
        <authorList>
            <person name="Zhang S."/>
            <person name="Wei T."/>
            <person name="Hou G."/>
            <person name="Zhang C."/>
            <person name="Liang P."/>
            <person name="Ni J."/>
            <person name="Sheng D."/>
            <person name="Shen Y."/>
        </authorList>
    </citation>
    <scope>INDUCTION</scope>
</reference>
<reference key="4">
    <citation type="journal article" date="2011" name="Extremophiles">
        <title>The carboxyl terminal of the archaeal nuclease NurA is involved in the interaction with single-stranded DNA-binding protein and dimer formation.</title>
        <authorList>
            <person name="Wei T."/>
            <person name="Zhang S."/>
            <person name="Hou L."/>
            <person name="Ni J."/>
            <person name="Sheng D."/>
            <person name="Shen Y."/>
        </authorList>
    </citation>
    <scope>SUBUNIT</scope>
    <scope>DOMAIN</scope>
    <scope>MUTAGENESIS OF ASP-56; GLU-114; ASP-131; TYR-291 AND HIS-299</scope>
</reference>